<sequence>MADRFSRFNEDRDFQGNHFDQYEEGHLEIEQASLDKPIESDNIGHRLLQKHGWKLGQGLGKSLQGRTDPIPIVVKYDVMGMGRMEMELDYAEDATERRRVLEVEKEDTEELRQKYKDYVDKEKAIAKALEDLRANFYCELCDKQYQKHQEFDNHINSYDHAHKQRLKDLKQREFARNVSSRSRKDEKKQEKALRRLHELAEQRKQAECAPGSGPMFKPTTVAVDEEGGEDDKDESATNSGTGATASCGLGSEFSTDKGGPFTAVQITNTTGLAQAPGLASQGISFGIKNNLGTPLQKLGVSFSFAKKAPVKLESIASVFKDHAEEGTSEDGTKPDEKSSDQGLQKVGDSDGSSNLDGKKEDEDPQDGGSLASTLSKLKRMKREEGAGATEPEYYHYIPPAHCKVKPNFPFLLFMRASEQMDGDNTTHPKNAPESKKGSSPKPKSCIKAAASQGAEKTVSEVSEQPKETSMTEPSEPGSKAEAKKALGGDVSDQSLESHSQKVSETQMCESNSSKETSLATPAGKESQEGPKHPTGPFFPVLSKDESTALQWPSELLIFTKAEPSISYSCNPLYFDFKLSRNKDARTKGTEKPKDIGSSSKDHLQGLDPGEPNKSKEVGGEKIVRSSGGRMDAPASGSACSGLNKQEPGGSHGSETEDTGRSLPSKKERSGKSHRHKKKKKHKKSSKHKRKHKADTEEKSSKAESGEKSKKRKKRKRKKNKSSAPADSERGPKPEPPGSGSPAPPRRRRRAQDDSQRRSLPAEEGSSGKKDEGGGGSSSQDHGGRKHKGELPPSSCQRRAGTKRSSRSSHRSQPSSGDEDSDDASSHRLHQKSPSQYSEEEEEEDSGSEHSRSRSRSGRRHSSHRSSRRSYSSSSDASSDQSCYSRQRSYSDDSYSDYSDRSRRHSKRSHDSDDSDYASSKHRSKRHKYSSSDDDYSLSCSQSRSRSRSHTRERSRSRGRSRSSSCSRSRSKRRSRSTTAHSWQRSRSYSRDRSRSTRSPSQRSGSRKRSWGHESPEERHSGRRDFIRSKIYRSQSPHYFRSGRGEGPGKKDDGRGDDSKATGPPSQNSNIGTGRGSEGDCSPEDKNSVTAKLLLEKIQSRKVERKPSVSEEVQATPNKAGPKLKDPPQGYFGPKLPPSLGNKPVLPLIGKLPATRKPNKKCEESGLERGEEQEQSETEEGPPGSSDALFGHQFPSEETTGPLLDPPPEESKSGEATADHPVAPLGTPAHSDCYPGDPTISHNYLPDPSDGDTLESLDSSSQPGPVESSLLPIAPDLEHFPSYAPPSGDPSIESTDGAEDASLAPLESQPITFTPEEMEKYSKLQQAAQQHIQQQLLAKQVKAFPASAALAPATPALQPIHIQQPATASATSITTVQHAILQHHAAAAAAAIGIHPHPHPQPLAQVHHIPQPHLTPISLSHLTHSIIPGHPATFLASHPIHIIPASAIHPGPFTFHPVPHAALYPTLLAPRPAAAAATALHLHPLLHPIFSGQDLQHPPSHGT</sequence>
<protein>
    <recommendedName>
        <fullName>G patch domain-containing protein 8</fullName>
    </recommendedName>
</protein>
<accession>Q9UKJ3</accession>
<accession>B9EGP9</accession>
<accession>O60300</accession>
<accession>Q8TB99</accession>
<reference key="1">
    <citation type="journal article" date="1998" name="DNA Res.">
        <title>Prediction of the coding sequences of unidentified human genes. IX. The complete sequences of 100 new cDNA clones from brain which can code for large proteins in vitro.</title>
        <authorList>
            <person name="Nagase T."/>
            <person name="Ishikawa K."/>
            <person name="Miyajima N."/>
            <person name="Tanaka A."/>
            <person name="Kotani H."/>
            <person name="Nomura N."/>
            <person name="Ohara O."/>
        </authorList>
    </citation>
    <scope>NUCLEOTIDE SEQUENCE [LARGE SCALE MRNA] (ISOFORM 2)</scope>
    <source>
        <tissue>Brain</tissue>
    </source>
</reference>
<reference key="2">
    <citation type="journal article" date="2006" name="Nature">
        <title>DNA sequence of human chromosome 17 and analysis of rearrangement in the human lineage.</title>
        <authorList>
            <person name="Zody M.C."/>
            <person name="Garber M."/>
            <person name="Adams D.J."/>
            <person name="Sharpe T."/>
            <person name="Harrow J."/>
            <person name="Lupski J.R."/>
            <person name="Nicholson C."/>
            <person name="Searle S.M."/>
            <person name="Wilming L."/>
            <person name="Young S.K."/>
            <person name="Abouelleil A."/>
            <person name="Allen N.R."/>
            <person name="Bi W."/>
            <person name="Bloom T."/>
            <person name="Borowsky M.L."/>
            <person name="Bugalter B.E."/>
            <person name="Butler J."/>
            <person name="Chang J.L."/>
            <person name="Chen C.-K."/>
            <person name="Cook A."/>
            <person name="Corum B."/>
            <person name="Cuomo C.A."/>
            <person name="de Jong P.J."/>
            <person name="DeCaprio D."/>
            <person name="Dewar K."/>
            <person name="FitzGerald M."/>
            <person name="Gilbert J."/>
            <person name="Gibson R."/>
            <person name="Gnerre S."/>
            <person name="Goldstein S."/>
            <person name="Grafham D.V."/>
            <person name="Grocock R."/>
            <person name="Hafez N."/>
            <person name="Hagopian D.S."/>
            <person name="Hart E."/>
            <person name="Norman C.H."/>
            <person name="Humphray S."/>
            <person name="Jaffe D.B."/>
            <person name="Jones M."/>
            <person name="Kamal M."/>
            <person name="Khodiyar V.K."/>
            <person name="LaButti K."/>
            <person name="Laird G."/>
            <person name="Lehoczky J."/>
            <person name="Liu X."/>
            <person name="Lokyitsang T."/>
            <person name="Loveland J."/>
            <person name="Lui A."/>
            <person name="Macdonald P."/>
            <person name="Major J.E."/>
            <person name="Matthews L."/>
            <person name="Mauceli E."/>
            <person name="McCarroll S.A."/>
            <person name="Mihalev A.H."/>
            <person name="Mudge J."/>
            <person name="Nguyen C."/>
            <person name="Nicol R."/>
            <person name="O'Leary S.B."/>
            <person name="Osoegawa K."/>
            <person name="Schwartz D.C."/>
            <person name="Shaw-Smith C."/>
            <person name="Stankiewicz P."/>
            <person name="Steward C."/>
            <person name="Swarbreck D."/>
            <person name="Venkataraman V."/>
            <person name="Whittaker C.A."/>
            <person name="Yang X."/>
            <person name="Zimmer A.R."/>
            <person name="Bradley A."/>
            <person name="Hubbard T."/>
            <person name="Birren B.W."/>
            <person name="Rogers J."/>
            <person name="Lander E.S."/>
            <person name="Nusbaum C."/>
        </authorList>
    </citation>
    <scope>NUCLEOTIDE SEQUENCE [LARGE SCALE GENOMIC DNA]</scope>
</reference>
<reference key="3">
    <citation type="submission" date="2005-09" db="EMBL/GenBank/DDBJ databases">
        <authorList>
            <person name="Mural R.J."/>
            <person name="Istrail S."/>
            <person name="Sutton G.G."/>
            <person name="Florea L."/>
            <person name="Halpern A.L."/>
            <person name="Mobarry C.M."/>
            <person name="Lippert R."/>
            <person name="Walenz B."/>
            <person name="Shatkay H."/>
            <person name="Dew I."/>
            <person name="Miller J.R."/>
            <person name="Flanigan M.J."/>
            <person name="Edwards N.J."/>
            <person name="Bolanos R."/>
            <person name="Fasulo D."/>
            <person name="Halldorsson B.V."/>
            <person name="Hannenhalli S."/>
            <person name="Turner R."/>
            <person name="Yooseph S."/>
            <person name="Lu F."/>
            <person name="Nusskern D.R."/>
            <person name="Shue B.C."/>
            <person name="Zheng X.H."/>
            <person name="Zhong F."/>
            <person name="Delcher A.L."/>
            <person name="Huson D.H."/>
            <person name="Kravitz S.A."/>
            <person name="Mouchard L."/>
            <person name="Reinert K."/>
            <person name="Remington K.A."/>
            <person name="Clark A.G."/>
            <person name="Waterman M.S."/>
            <person name="Eichler E.E."/>
            <person name="Adams M.D."/>
            <person name="Hunkapiller M.W."/>
            <person name="Myers E.W."/>
            <person name="Venter J.C."/>
        </authorList>
    </citation>
    <scope>NUCLEOTIDE SEQUENCE [LARGE SCALE GENOMIC DNA]</scope>
</reference>
<reference key="4">
    <citation type="journal article" date="2004" name="Genome Res.">
        <title>The status, quality, and expansion of the NIH full-length cDNA project: the Mammalian Gene Collection (MGC).</title>
        <authorList>
            <consortium name="The MGC Project Team"/>
        </authorList>
    </citation>
    <scope>NUCLEOTIDE SEQUENCE [LARGE SCALE MRNA] (ISOFORM 3)</scope>
    <scope>NUCLEOTIDE SEQUENCE [LARGE SCALE MRNA] OF 998-1502 (ISOFORMS 1/2)</scope>
    <source>
        <tissue>Skin</tissue>
        <tissue>Testis</tissue>
    </source>
</reference>
<reference key="5">
    <citation type="journal article" date="2004" name="Nat. Genet.">
        <title>Complete sequencing and characterization of 21,243 full-length human cDNAs.</title>
        <authorList>
            <person name="Ota T."/>
            <person name="Suzuki Y."/>
            <person name="Nishikawa T."/>
            <person name="Otsuki T."/>
            <person name="Sugiyama T."/>
            <person name="Irie R."/>
            <person name="Wakamatsu A."/>
            <person name="Hayashi K."/>
            <person name="Sato H."/>
            <person name="Nagai K."/>
            <person name="Kimura K."/>
            <person name="Makita H."/>
            <person name="Sekine M."/>
            <person name="Obayashi M."/>
            <person name="Nishi T."/>
            <person name="Shibahara T."/>
            <person name="Tanaka T."/>
            <person name="Ishii S."/>
            <person name="Yamamoto J."/>
            <person name="Saito K."/>
            <person name="Kawai Y."/>
            <person name="Isono Y."/>
            <person name="Nakamura Y."/>
            <person name="Nagahari K."/>
            <person name="Murakami K."/>
            <person name="Yasuda T."/>
            <person name="Iwayanagi T."/>
            <person name="Wagatsuma M."/>
            <person name="Shiratori A."/>
            <person name="Sudo H."/>
            <person name="Hosoiri T."/>
            <person name="Kaku Y."/>
            <person name="Kodaira H."/>
            <person name="Kondo H."/>
            <person name="Sugawara M."/>
            <person name="Takahashi M."/>
            <person name="Kanda K."/>
            <person name="Yokoi T."/>
            <person name="Furuya T."/>
            <person name="Kikkawa E."/>
            <person name="Omura Y."/>
            <person name="Abe K."/>
            <person name="Kamihara K."/>
            <person name="Katsuta N."/>
            <person name="Sato K."/>
            <person name="Tanikawa M."/>
            <person name="Yamazaki M."/>
            <person name="Ninomiya K."/>
            <person name="Ishibashi T."/>
            <person name="Yamashita H."/>
            <person name="Murakawa K."/>
            <person name="Fujimori K."/>
            <person name="Tanai H."/>
            <person name="Kimata M."/>
            <person name="Watanabe M."/>
            <person name="Hiraoka S."/>
            <person name="Chiba Y."/>
            <person name="Ishida S."/>
            <person name="Ono Y."/>
            <person name="Takiguchi S."/>
            <person name="Watanabe S."/>
            <person name="Yosida M."/>
            <person name="Hotuta T."/>
            <person name="Kusano J."/>
            <person name="Kanehori K."/>
            <person name="Takahashi-Fujii A."/>
            <person name="Hara H."/>
            <person name="Tanase T.-O."/>
            <person name="Nomura Y."/>
            <person name="Togiya S."/>
            <person name="Komai F."/>
            <person name="Hara R."/>
            <person name="Takeuchi K."/>
            <person name="Arita M."/>
            <person name="Imose N."/>
            <person name="Musashino K."/>
            <person name="Yuuki H."/>
            <person name="Oshima A."/>
            <person name="Sasaki N."/>
            <person name="Aotsuka S."/>
            <person name="Yoshikawa Y."/>
            <person name="Matsunawa H."/>
            <person name="Ichihara T."/>
            <person name="Shiohata N."/>
            <person name="Sano S."/>
            <person name="Moriya S."/>
            <person name="Momiyama H."/>
            <person name="Satoh N."/>
            <person name="Takami S."/>
            <person name="Terashima Y."/>
            <person name="Suzuki O."/>
            <person name="Nakagawa S."/>
            <person name="Senoh A."/>
            <person name="Mizoguchi H."/>
            <person name="Goto Y."/>
            <person name="Shimizu F."/>
            <person name="Wakebe H."/>
            <person name="Hishigaki H."/>
            <person name="Watanabe T."/>
            <person name="Sugiyama A."/>
            <person name="Takemoto M."/>
            <person name="Kawakami B."/>
            <person name="Yamazaki M."/>
            <person name="Watanabe K."/>
            <person name="Kumagai A."/>
            <person name="Itakura S."/>
            <person name="Fukuzumi Y."/>
            <person name="Fujimori Y."/>
            <person name="Komiyama M."/>
            <person name="Tashiro H."/>
            <person name="Tanigami A."/>
            <person name="Fujiwara T."/>
            <person name="Ono T."/>
            <person name="Yamada K."/>
            <person name="Fujii Y."/>
            <person name="Ozaki K."/>
            <person name="Hirao M."/>
            <person name="Ohmori Y."/>
            <person name="Kawabata A."/>
            <person name="Hikiji T."/>
            <person name="Kobatake N."/>
            <person name="Inagaki H."/>
            <person name="Ikema Y."/>
            <person name="Okamoto S."/>
            <person name="Okitani R."/>
            <person name="Kawakami T."/>
            <person name="Noguchi S."/>
            <person name="Itoh T."/>
            <person name="Shigeta K."/>
            <person name="Senba T."/>
            <person name="Matsumura K."/>
            <person name="Nakajima Y."/>
            <person name="Mizuno T."/>
            <person name="Morinaga M."/>
            <person name="Sasaki M."/>
            <person name="Togashi T."/>
            <person name="Oyama M."/>
            <person name="Hata H."/>
            <person name="Watanabe M."/>
            <person name="Komatsu T."/>
            <person name="Mizushima-Sugano J."/>
            <person name="Satoh T."/>
            <person name="Shirai Y."/>
            <person name="Takahashi Y."/>
            <person name="Nakagawa K."/>
            <person name="Okumura K."/>
            <person name="Nagase T."/>
            <person name="Nomura N."/>
            <person name="Kikuchi H."/>
            <person name="Masuho Y."/>
            <person name="Yamashita R."/>
            <person name="Nakai K."/>
            <person name="Yada T."/>
            <person name="Nakamura Y."/>
            <person name="Ohara O."/>
            <person name="Isogai T."/>
            <person name="Sugano S."/>
        </authorList>
    </citation>
    <scope>NUCLEOTIDE SEQUENCE [LARGE SCALE MRNA] OF 1-678 (ISOFORM 1)</scope>
</reference>
<reference key="6">
    <citation type="journal article" date="1999" name="Blood">
        <title>The human platelet alphaIIb gene is not closely linked to its integrin partner beta3.</title>
        <authorList>
            <person name="Thornton M.A."/>
            <person name="Poncz M."/>
            <person name="Korostishevsky M."/>
            <person name="Yakobson E."/>
            <person name="Usher S."/>
            <person name="Seligsohn U."/>
            <person name="Peretz H."/>
        </authorList>
    </citation>
    <scope>NUCLEOTIDE SEQUENCE [GENOMIC DNA] OF 414-1502</scope>
    <scope>VARIANT GLY-1259</scope>
</reference>
<reference key="7">
    <citation type="journal article" date="2006" name="Cell">
        <title>Global, in vivo, and site-specific phosphorylation dynamics in signaling networks.</title>
        <authorList>
            <person name="Olsen J.V."/>
            <person name="Blagoev B."/>
            <person name="Gnad F."/>
            <person name="Macek B."/>
            <person name="Kumar C."/>
            <person name="Mortensen P."/>
            <person name="Mann M."/>
        </authorList>
    </citation>
    <scope>PHOSPHORYLATION [LARGE SCALE ANALYSIS] AT SER-1014</scope>
    <scope>IDENTIFICATION BY MASS SPECTROMETRY [LARGE SCALE ANALYSIS]</scope>
    <source>
        <tissue>Cervix carcinoma</tissue>
    </source>
</reference>
<reference key="8">
    <citation type="journal article" date="2008" name="Proc. Natl. Acad. Sci. U.S.A.">
        <title>A quantitative atlas of mitotic phosphorylation.</title>
        <authorList>
            <person name="Dephoure N."/>
            <person name="Zhou C."/>
            <person name="Villen J."/>
            <person name="Beausoleil S.A."/>
            <person name="Bakalarski C.E."/>
            <person name="Elledge S.J."/>
            <person name="Gygi S.P."/>
        </authorList>
    </citation>
    <scope>PHOSPHORYLATION [LARGE SCALE ANALYSIS] AT SER-758; SER-1033; SER-1035; SER-1081 AND SER-1107</scope>
    <scope>IDENTIFICATION BY MASS SPECTROMETRY [LARGE SCALE ANALYSIS]</scope>
    <source>
        <tissue>Cervix carcinoma</tissue>
    </source>
</reference>
<reference key="9">
    <citation type="journal article" date="2009" name="Anal. Chem.">
        <title>Lys-N and trypsin cover complementary parts of the phosphoproteome in a refined SCX-based approach.</title>
        <authorList>
            <person name="Gauci S."/>
            <person name="Helbig A.O."/>
            <person name="Slijper M."/>
            <person name="Krijgsveld J."/>
            <person name="Heck A.J."/>
            <person name="Mohammed S."/>
        </authorList>
    </citation>
    <scope>IDENTIFICATION BY MASS SPECTROMETRY [LARGE SCALE ANALYSIS]</scope>
</reference>
<reference key="10">
    <citation type="journal article" date="2009" name="Sci. Signal.">
        <title>Quantitative phosphoproteomic analysis of T cell receptor signaling reveals system-wide modulation of protein-protein interactions.</title>
        <authorList>
            <person name="Mayya V."/>
            <person name="Lundgren D.H."/>
            <person name="Hwang S.-I."/>
            <person name="Rezaul K."/>
            <person name="Wu L."/>
            <person name="Eng J.K."/>
            <person name="Rodionov V."/>
            <person name="Han D.K."/>
        </authorList>
    </citation>
    <scope>PHOSPHORYLATION [LARGE SCALE ANALYSIS] AT SER-1107</scope>
    <scope>IDENTIFICATION BY MASS SPECTROMETRY [LARGE SCALE ANALYSIS]</scope>
    <source>
        <tissue>Leukemic T-cell</tissue>
    </source>
</reference>
<reference key="11">
    <citation type="journal article" date="2010" name="Sci. Signal.">
        <title>Quantitative phosphoproteomics reveals widespread full phosphorylation site occupancy during mitosis.</title>
        <authorList>
            <person name="Olsen J.V."/>
            <person name="Vermeulen M."/>
            <person name="Santamaria A."/>
            <person name="Kumar C."/>
            <person name="Miller M.L."/>
            <person name="Jensen L.J."/>
            <person name="Gnad F."/>
            <person name="Cox J."/>
            <person name="Jensen T.S."/>
            <person name="Nigg E.A."/>
            <person name="Brunak S."/>
            <person name="Mann M."/>
        </authorList>
    </citation>
    <scope>PHOSPHORYLATION [LARGE SCALE ANALYSIS] AT SER-1107</scope>
    <scope>IDENTIFICATION BY MASS SPECTROMETRY [LARGE SCALE ANALYSIS]</scope>
    <source>
        <tissue>Cervix carcinoma</tissue>
    </source>
</reference>
<reference key="12">
    <citation type="journal article" date="2011" name="Sci. Signal.">
        <title>System-wide temporal characterization of the proteome and phosphoproteome of human embryonic stem cell differentiation.</title>
        <authorList>
            <person name="Rigbolt K.T."/>
            <person name="Prokhorova T.A."/>
            <person name="Akimov V."/>
            <person name="Henningsen J."/>
            <person name="Johansen P.T."/>
            <person name="Kratchmarova I."/>
            <person name="Kassem M."/>
            <person name="Mann M."/>
            <person name="Olsen J.V."/>
            <person name="Blagoev B."/>
        </authorList>
    </citation>
    <scope>PHOSPHORYLATION [LARGE SCALE ANALYSIS] AT SER-738; SER-740; SER-981; SER-1035 AND SER-1107</scope>
    <scope>IDENTIFICATION BY MASS SPECTROMETRY [LARGE SCALE ANALYSIS]</scope>
</reference>
<reference key="13">
    <citation type="journal article" date="2013" name="J. Proteome Res.">
        <title>Toward a comprehensive characterization of a human cancer cell phosphoproteome.</title>
        <authorList>
            <person name="Zhou H."/>
            <person name="Di Palma S."/>
            <person name="Preisinger C."/>
            <person name="Peng M."/>
            <person name="Polat A.N."/>
            <person name="Heck A.J."/>
            <person name="Mohammed S."/>
        </authorList>
    </citation>
    <scope>PHOSPHORYLATION [LARGE SCALE ANALYSIS] AT SER-491; SER-653; SER-738; SER-740; SER-1009; SER-1014; SER-1033; SER-1035 AND SER-1107</scope>
    <scope>IDENTIFICATION BY MASS SPECTROMETRY [LARGE SCALE ANALYSIS]</scope>
    <source>
        <tissue>Cervix carcinoma</tissue>
        <tissue>Erythroleukemia</tissue>
    </source>
</reference>
<reference key="14">
    <citation type="journal article" date="2014" name="J. Proteomics">
        <title>An enzyme assisted RP-RPLC approach for in-depth analysis of human liver phosphoproteome.</title>
        <authorList>
            <person name="Bian Y."/>
            <person name="Song C."/>
            <person name="Cheng K."/>
            <person name="Dong M."/>
            <person name="Wang F."/>
            <person name="Huang J."/>
            <person name="Sun D."/>
            <person name="Wang L."/>
            <person name="Ye M."/>
            <person name="Zou H."/>
        </authorList>
    </citation>
    <scope>PHOSPHORYLATION [LARGE SCALE ANALYSIS] AT SER-740</scope>
    <scope>IDENTIFICATION BY MASS SPECTROMETRY [LARGE SCALE ANALYSIS]</scope>
    <source>
        <tissue>Liver</tissue>
    </source>
</reference>
<reference key="15">
    <citation type="journal article" date="2017" name="Nat. Struct. Mol. Biol.">
        <title>Site-specific mapping of the human SUMO proteome reveals co-modification with phosphorylation.</title>
        <authorList>
            <person name="Hendriks I.A."/>
            <person name="Lyon D."/>
            <person name="Young C."/>
            <person name="Jensen L.J."/>
            <person name="Vertegaal A.C."/>
            <person name="Nielsen M.L."/>
        </authorList>
    </citation>
    <scope>SUMOYLATION [LARGE SCALE ANALYSIS] AT LYS-311; LYS-577 AND LYS-1105</scope>
    <scope>IDENTIFICATION BY MASS SPECTROMETRY [LARGE SCALE ANALYSIS]</scope>
</reference>
<reference key="16">
    <citation type="journal article" date="2011" name="Hum. Genet.">
        <title>Hyperuricemia cosegregating with osteogenesis imperfecta is associated with a mutation in GPATCH8.</title>
        <authorList>
            <person name="Kaneko H."/>
            <person name="Kitoh H."/>
            <person name="Matsuura T."/>
            <person name="Masuda A."/>
            <person name="Ito M."/>
            <person name="Mottes M."/>
            <person name="Rauch F."/>
            <person name="Ishiguro N."/>
            <person name="Ohno K."/>
        </authorList>
    </citation>
    <scope>VARIANT PRO-979</scope>
</reference>
<dbReference type="EMBL" id="AB011125">
    <property type="protein sequence ID" value="BAA25479.2"/>
    <property type="status" value="ALT_INIT"/>
    <property type="molecule type" value="mRNA"/>
</dbReference>
<dbReference type="EMBL" id="AC103703">
    <property type="status" value="NOT_ANNOTATED_CDS"/>
    <property type="molecule type" value="Genomic_DNA"/>
</dbReference>
<dbReference type="EMBL" id="AC007722">
    <property type="status" value="NOT_ANNOTATED_CDS"/>
    <property type="molecule type" value="Genomic_DNA"/>
</dbReference>
<dbReference type="EMBL" id="CH471178">
    <property type="protein sequence ID" value="EAW51593.1"/>
    <property type="molecule type" value="Genomic_DNA"/>
</dbReference>
<dbReference type="EMBL" id="BC024147">
    <property type="protein sequence ID" value="AAH24147.2"/>
    <property type="molecule type" value="mRNA"/>
</dbReference>
<dbReference type="EMBL" id="BC136629">
    <property type="protein sequence ID" value="AAI36630.1"/>
    <property type="status" value="ALT_SEQ"/>
    <property type="molecule type" value="mRNA"/>
</dbReference>
<dbReference type="EMBL" id="AK025600">
    <property type="status" value="NOT_ANNOTATED_CDS"/>
    <property type="molecule type" value="mRNA"/>
</dbReference>
<dbReference type="EMBL" id="AF160252">
    <property type="protein sequence ID" value="AAF03681.1"/>
    <property type="molecule type" value="Genomic_DNA"/>
</dbReference>
<dbReference type="CCDS" id="CCDS32666.1">
    <molecule id="Q9UKJ3-1"/>
</dbReference>
<dbReference type="PIR" id="T00329">
    <property type="entry name" value="T00329"/>
</dbReference>
<dbReference type="RefSeq" id="NP_001002909.1">
    <molecule id="Q9UKJ3-1"/>
    <property type="nucleotide sequence ID" value="NM_001002909.4"/>
</dbReference>
<dbReference type="RefSeq" id="NP_001291868.1">
    <property type="nucleotide sequence ID" value="NM_001304939.1"/>
</dbReference>
<dbReference type="RefSeq" id="NP_001291869.1">
    <molecule id="Q9UKJ3-2"/>
    <property type="nucleotide sequence ID" value="NM_001304940.2"/>
</dbReference>
<dbReference type="RefSeq" id="NP_001291870.1">
    <molecule id="Q9UKJ3-2"/>
    <property type="nucleotide sequence ID" value="NM_001304941.2"/>
</dbReference>
<dbReference type="RefSeq" id="NP_001291871.1">
    <molecule id="Q9UKJ3-2"/>
    <property type="nucleotide sequence ID" value="NM_001304942.2"/>
</dbReference>
<dbReference type="RefSeq" id="NP_001291872.1">
    <molecule id="Q9UKJ3-2"/>
    <property type="nucleotide sequence ID" value="NM_001304943.2"/>
</dbReference>
<dbReference type="RefSeq" id="XP_016879864.1">
    <property type="nucleotide sequence ID" value="XM_017024375.1"/>
</dbReference>
<dbReference type="RefSeq" id="XP_016879865.1">
    <property type="nucleotide sequence ID" value="XM_017024376.1"/>
</dbReference>
<dbReference type="RefSeq" id="XP_016879866.1">
    <property type="nucleotide sequence ID" value="XM_017024377.1"/>
</dbReference>
<dbReference type="RefSeq" id="XP_016879867.1">
    <property type="nucleotide sequence ID" value="XM_017024378.1"/>
</dbReference>
<dbReference type="RefSeq" id="XP_016879868.1">
    <property type="nucleotide sequence ID" value="XM_017024379.1"/>
</dbReference>
<dbReference type="RefSeq" id="XP_047291630.1">
    <molecule id="Q9UKJ3-2"/>
    <property type="nucleotide sequence ID" value="XM_047435674.1"/>
</dbReference>
<dbReference type="SMR" id="Q9UKJ3"/>
<dbReference type="BioGRID" id="116749">
    <property type="interactions" value="120"/>
</dbReference>
<dbReference type="FunCoup" id="Q9UKJ3">
    <property type="interactions" value="1863"/>
</dbReference>
<dbReference type="IntAct" id="Q9UKJ3">
    <property type="interactions" value="66"/>
</dbReference>
<dbReference type="MINT" id="Q9UKJ3"/>
<dbReference type="STRING" id="9606.ENSP00000467556"/>
<dbReference type="ChEMBL" id="CHEMBL4523489"/>
<dbReference type="GlyGen" id="Q9UKJ3">
    <property type="glycosylation" value="5 sites, 1 O-linked glycan (2 sites)"/>
</dbReference>
<dbReference type="iPTMnet" id="Q9UKJ3"/>
<dbReference type="MetOSite" id="Q9UKJ3"/>
<dbReference type="PhosphoSitePlus" id="Q9UKJ3"/>
<dbReference type="BioMuta" id="GPATCH8"/>
<dbReference type="DMDM" id="254763309"/>
<dbReference type="jPOST" id="Q9UKJ3"/>
<dbReference type="MassIVE" id="Q9UKJ3"/>
<dbReference type="PaxDb" id="9606-ENSP00000467556"/>
<dbReference type="PeptideAtlas" id="Q9UKJ3"/>
<dbReference type="ProteomicsDB" id="84806">
    <molecule id="Q9UKJ3-1"/>
</dbReference>
<dbReference type="ProteomicsDB" id="84807">
    <molecule id="Q9UKJ3-2"/>
</dbReference>
<dbReference type="ProteomicsDB" id="84808">
    <molecule id="Q9UKJ3-3"/>
</dbReference>
<dbReference type="Pumba" id="Q9UKJ3"/>
<dbReference type="Antibodypedia" id="52434">
    <property type="antibodies" value="30 antibodies from 13 providers"/>
</dbReference>
<dbReference type="Ensembl" id="ENST00000587228.5">
    <molecule id="Q9UKJ3-3"/>
    <property type="protein sequence ID" value="ENSP00000468719.1"/>
    <property type="gene ID" value="ENSG00000186566.13"/>
</dbReference>
<dbReference type="Ensembl" id="ENST00000591680.6">
    <molecule id="Q9UKJ3-1"/>
    <property type="protein sequence ID" value="ENSP00000467556.1"/>
    <property type="gene ID" value="ENSG00000186566.13"/>
</dbReference>
<dbReference type="GeneID" id="23131"/>
<dbReference type="KEGG" id="hsa:23131"/>
<dbReference type="MANE-Select" id="ENST00000591680.6">
    <property type="protein sequence ID" value="ENSP00000467556.1"/>
    <property type="RefSeq nucleotide sequence ID" value="NM_001002909.4"/>
    <property type="RefSeq protein sequence ID" value="NP_001002909.1"/>
</dbReference>
<dbReference type="UCSC" id="uc002igw.3">
    <molecule id="Q9UKJ3-1"/>
    <property type="organism name" value="human"/>
</dbReference>
<dbReference type="AGR" id="HGNC:29066"/>
<dbReference type="CTD" id="23131"/>
<dbReference type="DisGeNET" id="23131"/>
<dbReference type="GeneCards" id="GPATCH8"/>
<dbReference type="HGNC" id="HGNC:29066">
    <property type="gene designation" value="GPATCH8"/>
</dbReference>
<dbReference type="HPA" id="ENSG00000186566">
    <property type="expression patterns" value="Low tissue specificity"/>
</dbReference>
<dbReference type="MIM" id="614396">
    <property type="type" value="gene"/>
</dbReference>
<dbReference type="neXtProt" id="NX_Q9UKJ3"/>
<dbReference type="OpenTargets" id="ENSG00000186566"/>
<dbReference type="PharmGKB" id="PA162390105"/>
<dbReference type="VEuPathDB" id="HostDB:ENSG00000186566"/>
<dbReference type="eggNOG" id="KOG2184">
    <property type="taxonomic scope" value="Eukaryota"/>
</dbReference>
<dbReference type="GeneTree" id="ENSGT00940000159523"/>
<dbReference type="HOGENOM" id="CLU_006418_0_0_1"/>
<dbReference type="InParanoid" id="Q9UKJ3"/>
<dbReference type="OMA" id="DHGGKKH"/>
<dbReference type="OrthoDB" id="4822at2759"/>
<dbReference type="PAN-GO" id="Q9UKJ3">
    <property type="GO annotations" value="1 GO annotation based on evolutionary models"/>
</dbReference>
<dbReference type="PhylomeDB" id="Q9UKJ3"/>
<dbReference type="PathwayCommons" id="Q9UKJ3"/>
<dbReference type="SignaLink" id="Q9UKJ3"/>
<dbReference type="BioGRID-ORCS" id="23131">
    <property type="hits" value="39 hits in 1160 CRISPR screens"/>
</dbReference>
<dbReference type="ChiTaRS" id="GPATCH8">
    <property type="organism name" value="human"/>
</dbReference>
<dbReference type="GeneWiki" id="GPATCH8"/>
<dbReference type="GenomeRNAi" id="23131"/>
<dbReference type="Pharos" id="Q9UKJ3">
    <property type="development level" value="Tdark"/>
</dbReference>
<dbReference type="PRO" id="PR:Q9UKJ3"/>
<dbReference type="Proteomes" id="UP000005640">
    <property type="component" value="Chromosome 17"/>
</dbReference>
<dbReference type="RNAct" id="Q9UKJ3">
    <property type="molecule type" value="protein"/>
</dbReference>
<dbReference type="Bgee" id="ENSG00000186566">
    <property type="expression patterns" value="Expressed in sural nerve and 208 other cell types or tissues"/>
</dbReference>
<dbReference type="ExpressionAtlas" id="Q9UKJ3">
    <property type="expression patterns" value="baseline and differential"/>
</dbReference>
<dbReference type="GO" id="GO:0005634">
    <property type="term" value="C:nucleus"/>
    <property type="evidence" value="ECO:0000318"/>
    <property type="project" value="GO_Central"/>
</dbReference>
<dbReference type="GO" id="GO:0003729">
    <property type="term" value="F:mRNA binding"/>
    <property type="evidence" value="ECO:0007669"/>
    <property type="project" value="Ensembl"/>
</dbReference>
<dbReference type="GO" id="GO:0003723">
    <property type="term" value="F:RNA binding"/>
    <property type="evidence" value="ECO:0007005"/>
    <property type="project" value="UniProtKB"/>
</dbReference>
<dbReference type="GO" id="GO:0008270">
    <property type="term" value="F:zinc ion binding"/>
    <property type="evidence" value="ECO:0007669"/>
    <property type="project" value="UniProtKB-KW"/>
</dbReference>
<dbReference type="GO" id="GO:0030097">
    <property type="term" value="P:hemopoiesis"/>
    <property type="evidence" value="ECO:0007669"/>
    <property type="project" value="Ensembl"/>
</dbReference>
<dbReference type="GO" id="GO:0000398">
    <property type="term" value="P:mRNA splicing, via spliceosome"/>
    <property type="evidence" value="ECO:0007669"/>
    <property type="project" value="Ensembl"/>
</dbReference>
<dbReference type="InterPro" id="IPR000467">
    <property type="entry name" value="G_patch_dom"/>
</dbReference>
<dbReference type="InterPro" id="IPR052445">
    <property type="entry name" value="ZnF-G_patch_domain"/>
</dbReference>
<dbReference type="InterPro" id="IPR036236">
    <property type="entry name" value="Znf_C2H2_sf"/>
</dbReference>
<dbReference type="InterPro" id="IPR013087">
    <property type="entry name" value="Znf_C2H2_type"/>
</dbReference>
<dbReference type="PANTHER" id="PTHR17614:SF11">
    <property type="entry name" value="G PATCH DOMAIN-CONTAINING PROTEIN 8"/>
    <property type="match status" value="1"/>
</dbReference>
<dbReference type="PANTHER" id="PTHR17614">
    <property type="entry name" value="ZINC FINGER-CONTAINING"/>
    <property type="match status" value="1"/>
</dbReference>
<dbReference type="Pfam" id="PF01585">
    <property type="entry name" value="G-patch"/>
    <property type="match status" value="1"/>
</dbReference>
<dbReference type="SMART" id="SM00443">
    <property type="entry name" value="G_patch"/>
    <property type="match status" value="1"/>
</dbReference>
<dbReference type="SUPFAM" id="SSF57667">
    <property type="entry name" value="beta-beta-alpha zinc fingers"/>
    <property type="match status" value="1"/>
</dbReference>
<dbReference type="PROSITE" id="PS50174">
    <property type="entry name" value="G_PATCH"/>
    <property type="match status" value="1"/>
</dbReference>
<dbReference type="PROSITE" id="PS00028">
    <property type="entry name" value="ZINC_FINGER_C2H2_1"/>
    <property type="match status" value="1"/>
</dbReference>
<dbReference type="PROSITE" id="PS50157">
    <property type="entry name" value="ZINC_FINGER_C2H2_2"/>
    <property type="match status" value="1"/>
</dbReference>
<organism>
    <name type="scientific">Homo sapiens</name>
    <name type="common">Human</name>
    <dbReference type="NCBI Taxonomy" id="9606"/>
    <lineage>
        <taxon>Eukaryota</taxon>
        <taxon>Metazoa</taxon>
        <taxon>Chordata</taxon>
        <taxon>Craniata</taxon>
        <taxon>Vertebrata</taxon>
        <taxon>Euteleostomi</taxon>
        <taxon>Mammalia</taxon>
        <taxon>Eutheria</taxon>
        <taxon>Euarchontoglires</taxon>
        <taxon>Primates</taxon>
        <taxon>Haplorrhini</taxon>
        <taxon>Catarrhini</taxon>
        <taxon>Hominidae</taxon>
        <taxon>Homo</taxon>
    </lineage>
</organism>
<proteinExistence type="evidence at protein level"/>
<comment type="interaction">
    <interactant intactId="EBI-948259">
        <id>Q9UKJ3</id>
    </interactant>
    <interactant intactId="EBI-930964">
        <id>P54253</id>
        <label>ATXN1</label>
    </interactant>
    <organismsDiffer>false</organismsDiffer>
    <experiments>4</experiments>
</comment>
<comment type="alternative products">
    <event type="alternative splicing"/>
    <isoform>
        <id>Q9UKJ3-1</id>
        <name>1</name>
        <sequence type="displayed"/>
    </isoform>
    <isoform>
        <id>Q9UKJ3-2</id>
        <name>2</name>
        <sequence type="described" ref="VSP_037683"/>
    </isoform>
    <isoform>
        <id>Q9UKJ3-3</id>
        <name>3</name>
        <sequence type="described" ref="VSP_037684 VSP_037685"/>
    </isoform>
</comment>
<comment type="sequence caution" evidence="10">
    <conflict type="erroneous translation">
        <sequence resource="EMBL-CDS" id="AAI36630"/>
    </conflict>
    <text>Wrong choice of CDS.</text>
</comment>
<comment type="sequence caution" evidence="10">
    <conflict type="erroneous initiation">
        <sequence resource="EMBL-CDS" id="BAA25479"/>
    </conflict>
</comment>
<keyword id="KW-0007">Acetylation</keyword>
<keyword id="KW-0025">Alternative splicing</keyword>
<keyword id="KW-0175">Coiled coil</keyword>
<keyword id="KW-1017">Isopeptide bond</keyword>
<keyword id="KW-0479">Metal-binding</keyword>
<keyword id="KW-0597">Phosphoprotein</keyword>
<keyword id="KW-1267">Proteomics identification</keyword>
<keyword id="KW-1185">Reference proteome</keyword>
<keyword id="KW-0832">Ubl conjugation</keyword>
<keyword id="KW-0862">Zinc</keyword>
<keyword id="KW-0863">Zinc-finger</keyword>
<feature type="chain" id="PRO_0000050761" description="G patch domain-containing protein 8">
    <location>
        <begin position="1"/>
        <end position="1502"/>
    </location>
</feature>
<feature type="domain" description="G-patch" evidence="4">
    <location>
        <begin position="40"/>
        <end position="86"/>
    </location>
</feature>
<feature type="zinc finger region" description="C2H2-type" evidence="3">
    <location>
        <begin position="136"/>
        <end position="160"/>
    </location>
</feature>
<feature type="region of interest" description="Disordered" evidence="5">
    <location>
        <begin position="172"/>
        <end position="251"/>
    </location>
</feature>
<feature type="region of interest" description="Disordered" evidence="5">
    <location>
        <begin position="323"/>
        <end position="391"/>
    </location>
</feature>
<feature type="region of interest" description="Disordered" evidence="5">
    <location>
        <begin position="419"/>
        <end position="541"/>
    </location>
</feature>
<feature type="region of interest" description="Disordered" evidence="5">
    <location>
        <begin position="579"/>
        <end position="1301"/>
    </location>
</feature>
<feature type="coiled-coil region" evidence="2">
    <location>
        <begin position="89"/>
        <end position="124"/>
    </location>
</feature>
<feature type="compositionally biased region" description="Basic and acidic residues" evidence="5">
    <location>
        <begin position="182"/>
        <end position="206"/>
    </location>
</feature>
<feature type="compositionally biased region" description="Acidic residues" evidence="5">
    <location>
        <begin position="223"/>
        <end position="233"/>
    </location>
</feature>
<feature type="compositionally biased region" description="Basic and acidic residues" evidence="5">
    <location>
        <begin position="323"/>
        <end position="339"/>
    </location>
</feature>
<feature type="compositionally biased region" description="Basic and acidic residues" evidence="5">
    <location>
        <begin position="424"/>
        <end position="436"/>
    </location>
</feature>
<feature type="compositionally biased region" description="Polar residues" evidence="5">
    <location>
        <begin position="459"/>
        <end position="472"/>
    </location>
</feature>
<feature type="compositionally biased region" description="Polar residues" evidence="5">
    <location>
        <begin position="491"/>
        <end position="519"/>
    </location>
</feature>
<feature type="compositionally biased region" description="Basic and acidic residues" evidence="5">
    <location>
        <begin position="579"/>
        <end position="623"/>
    </location>
</feature>
<feature type="compositionally biased region" description="Basic and acidic residues" evidence="5">
    <location>
        <begin position="653"/>
        <end position="670"/>
    </location>
</feature>
<feature type="compositionally biased region" description="Basic residues" evidence="5">
    <location>
        <begin position="671"/>
        <end position="692"/>
    </location>
</feature>
<feature type="compositionally biased region" description="Basic and acidic residues" evidence="5">
    <location>
        <begin position="693"/>
        <end position="707"/>
    </location>
</feature>
<feature type="compositionally biased region" description="Basic residues" evidence="5">
    <location>
        <begin position="708"/>
        <end position="720"/>
    </location>
</feature>
<feature type="compositionally biased region" description="Pro residues" evidence="5">
    <location>
        <begin position="733"/>
        <end position="743"/>
    </location>
</feature>
<feature type="compositionally biased region" description="Basic and acidic residues" evidence="5">
    <location>
        <begin position="750"/>
        <end position="772"/>
    </location>
</feature>
<feature type="compositionally biased region" description="Basic residues" evidence="5">
    <location>
        <begin position="799"/>
        <end position="809"/>
    </location>
</feature>
<feature type="compositionally biased region" description="Basic residues" evidence="5">
    <location>
        <begin position="852"/>
        <end position="867"/>
    </location>
</feature>
<feature type="compositionally biased region" description="Low complexity" evidence="5">
    <location>
        <begin position="868"/>
        <end position="896"/>
    </location>
</feature>
<feature type="compositionally biased region" description="Basic residues" evidence="5">
    <location>
        <begin position="919"/>
        <end position="928"/>
    </location>
</feature>
<feature type="compositionally biased region" description="Basic and acidic residues" evidence="5">
    <location>
        <begin position="1010"/>
        <end position="1027"/>
    </location>
</feature>
<feature type="compositionally biased region" description="Basic and acidic residues" evidence="5">
    <location>
        <begin position="1042"/>
        <end position="1059"/>
    </location>
</feature>
<feature type="compositionally biased region" description="Basic and acidic residues" evidence="5">
    <location>
        <begin position="1093"/>
        <end position="1108"/>
    </location>
</feature>
<feature type="compositionally biased region" description="Basic and acidic residues" evidence="5">
    <location>
        <begin position="1159"/>
        <end position="1171"/>
    </location>
</feature>
<feature type="modified residue" description="N6-acetyllysine" evidence="1">
    <location>
        <position position="479"/>
    </location>
</feature>
<feature type="modified residue" description="Phosphoserine" evidence="16">
    <location>
        <position position="491"/>
    </location>
</feature>
<feature type="modified residue" description="Phosphoserine" evidence="16">
    <location>
        <position position="653"/>
    </location>
</feature>
<feature type="modified residue" description="Phosphoserine" evidence="15 16">
    <location>
        <position position="738"/>
    </location>
</feature>
<feature type="modified residue" description="Phosphoserine" evidence="15 16 17">
    <location>
        <position position="740"/>
    </location>
</feature>
<feature type="modified residue" description="Phosphoserine" evidence="12">
    <location>
        <position position="758"/>
    </location>
</feature>
<feature type="modified residue" description="Phosphoserine" evidence="1">
    <location>
        <position position="911"/>
    </location>
</feature>
<feature type="modified residue" description="Phosphoserine" evidence="1">
    <location>
        <position position="914"/>
    </location>
</feature>
<feature type="modified residue" description="Phosphoserine" evidence="15">
    <location>
        <position position="981"/>
    </location>
</feature>
<feature type="modified residue" description="Phosphoserine" evidence="16">
    <location>
        <position position="1009"/>
    </location>
</feature>
<feature type="modified residue" description="Phosphoserine" evidence="11 16">
    <location>
        <position position="1014"/>
    </location>
</feature>
<feature type="modified residue" description="Phosphoserine" evidence="12 16">
    <location>
        <position position="1033"/>
    </location>
</feature>
<feature type="modified residue" description="Phosphoserine" evidence="12 15 16">
    <location>
        <position position="1035"/>
    </location>
</feature>
<feature type="modified residue" description="Phosphoserine" evidence="12">
    <location>
        <position position="1081"/>
    </location>
</feature>
<feature type="modified residue" description="Phosphoserine" evidence="12 13 14 15 16">
    <location>
        <position position="1107"/>
    </location>
</feature>
<feature type="modified residue" description="Phosphoserine" evidence="1">
    <location>
        <position position="1175"/>
    </location>
</feature>
<feature type="cross-link" description="Glycyl lysine isopeptide (Lys-Gly) (interchain with G-Cter in SUMO2)" evidence="18">
    <location>
        <position position="311"/>
    </location>
</feature>
<feature type="cross-link" description="Glycyl lysine isopeptide (Lys-Gly) (interchain with G-Cter in SUMO2)" evidence="18">
    <location>
        <position position="577"/>
    </location>
</feature>
<feature type="cross-link" description="Glycyl lysine isopeptide (Lys-Gly) (interchain with G-Cter in SUMO2)" evidence="18">
    <location>
        <position position="1105"/>
    </location>
</feature>
<feature type="splice variant" id="VSP_037683" description="In isoform 2." evidence="9">
    <location>
        <begin position="1"/>
        <end position="78"/>
    </location>
</feature>
<feature type="splice variant" id="VSP_037684" description="In isoform 3." evidence="8">
    <original>DNI</original>
    <variation>PSF</variation>
    <location>
        <begin position="41"/>
        <end position="43"/>
    </location>
</feature>
<feature type="splice variant" id="VSP_037685" description="In isoform 3." evidence="8">
    <location>
        <begin position="44"/>
        <end position="1502"/>
    </location>
</feature>
<feature type="sequence variant" id="VAR_067000" description="In dbSNP:rs727502862." evidence="7">
    <original>A</original>
    <variation>P</variation>
    <location>
        <position position="979"/>
    </location>
</feature>
<feature type="sequence variant" id="VAR_067001" description="In dbSNP:rs3744427.">
    <original>H</original>
    <variation>Q</variation>
    <location>
        <position position="1012"/>
    </location>
</feature>
<feature type="sequence variant" id="VAR_059658" description="In dbSNP:rs741902.">
    <original>R</original>
    <variation>Q</variation>
    <location>
        <position position="1043"/>
    </location>
</feature>
<feature type="sequence variant" id="VAR_059659" description="In dbSNP:rs936018.">
    <original>C</original>
    <variation>W</variation>
    <location>
        <position position="1161"/>
    </location>
</feature>
<feature type="sequence variant" id="VAR_067002" description="In dbSNP:rs760339." evidence="6">
    <original>S</original>
    <variation>G</variation>
    <location>
        <position position="1259"/>
    </location>
</feature>
<feature type="sequence conflict" description="In Ref. 5; AK025600." evidence="10" ref="5">
    <original>L</original>
    <variation>V</variation>
    <location>
        <position position="193"/>
    </location>
</feature>
<feature type="sequence conflict" description="In Ref. 6; AAF03681." evidence="10" ref="6">
    <original>E</original>
    <variation>K</variation>
    <location>
        <position position="620"/>
    </location>
</feature>
<feature type="sequence conflict" description="In Ref. 6; AAF03681." evidence="10" ref="6">
    <original>K</original>
    <variation>E</variation>
    <location>
        <position position="680"/>
    </location>
</feature>
<feature type="sequence conflict" description="In Ref. 6; AAF03681." evidence="10" ref="6">
    <original>H</original>
    <variation>P</variation>
    <location>
        <position position="691"/>
    </location>
</feature>
<gene>
    <name type="primary">GPATCH8</name>
    <name type="synonym">GPATC8</name>
    <name type="synonym">KIAA0553</name>
</gene>
<evidence type="ECO:0000250" key="1">
    <source>
        <dbReference type="UniProtKB" id="A2A6A1"/>
    </source>
</evidence>
<evidence type="ECO:0000255" key="2"/>
<evidence type="ECO:0000255" key="3">
    <source>
        <dbReference type="PROSITE-ProRule" id="PRU00042"/>
    </source>
</evidence>
<evidence type="ECO:0000255" key="4">
    <source>
        <dbReference type="PROSITE-ProRule" id="PRU00092"/>
    </source>
</evidence>
<evidence type="ECO:0000256" key="5">
    <source>
        <dbReference type="SAM" id="MobiDB-lite"/>
    </source>
</evidence>
<evidence type="ECO:0000269" key="6">
    <source>
    </source>
</evidence>
<evidence type="ECO:0000269" key="7">
    <source>
    </source>
</evidence>
<evidence type="ECO:0000303" key="8">
    <source>
    </source>
</evidence>
<evidence type="ECO:0000303" key="9">
    <source>
    </source>
</evidence>
<evidence type="ECO:0000305" key="10"/>
<evidence type="ECO:0007744" key="11">
    <source>
    </source>
</evidence>
<evidence type="ECO:0007744" key="12">
    <source>
    </source>
</evidence>
<evidence type="ECO:0007744" key="13">
    <source>
    </source>
</evidence>
<evidence type="ECO:0007744" key="14">
    <source>
    </source>
</evidence>
<evidence type="ECO:0007744" key="15">
    <source>
    </source>
</evidence>
<evidence type="ECO:0007744" key="16">
    <source>
    </source>
</evidence>
<evidence type="ECO:0007744" key="17">
    <source>
    </source>
</evidence>
<evidence type="ECO:0007744" key="18">
    <source>
    </source>
</evidence>
<name>GPTC8_HUMAN</name>